<evidence type="ECO:0000255" key="1">
    <source>
        <dbReference type="HAMAP-Rule" id="MF_00061"/>
    </source>
</evidence>
<organism>
    <name type="scientific">Finegoldia magna (strain ATCC 29328 / DSM 20472 / WAL 2508)</name>
    <name type="common">Peptostreptococcus magnus</name>
    <dbReference type="NCBI Taxonomy" id="334413"/>
    <lineage>
        <taxon>Bacteria</taxon>
        <taxon>Bacillati</taxon>
        <taxon>Bacillota</taxon>
        <taxon>Tissierellia</taxon>
        <taxon>Tissierellales</taxon>
        <taxon>Peptoniphilaceae</taxon>
        <taxon>Finegoldia</taxon>
    </lineage>
</organism>
<name>ISPE_FINM2</name>
<protein>
    <recommendedName>
        <fullName evidence="1">4-diphosphocytidyl-2-C-methyl-D-erythritol kinase</fullName>
        <shortName evidence="1">CMK</shortName>
        <ecNumber evidence="1">2.7.1.148</ecNumber>
    </recommendedName>
    <alternativeName>
        <fullName evidence="1">4-(cytidine-5'-diphospho)-2-C-methyl-D-erythritol kinase</fullName>
    </alternativeName>
</protein>
<gene>
    <name evidence="1" type="primary">ispE</name>
    <name type="ordered locus">FMG_0552</name>
</gene>
<proteinExistence type="inferred from homology"/>
<comment type="function">
    <text evidence="1">Catalyzes the phosphorylation of the position 2 hydroxy group of 4-diphosphocytidyl-2C-methyl-D-erythritol.</text>
</comment>
<comment type="catalytic activity">
    <reaction evidence="1">
        <text>4-CDP-2-C-methyl-D-erythritol + ATP = 4-CDP-2-C-methyl-D-erythritol 2-phosphate + ADP + H(+)</text>
        <dbReference type="Rhea" id="RHEA:18437"/>
        <dbReference type="ChEBI" id="CHEBI:15378"/>
        <dbReference type="ChEBI" id="CHEBI:30616"/>
        <dbReference type="ChEBI" id="CHEBI:57823"/>
        <dbReference type="ChEBI" id="CHEBI:57919"/>
        <dbReference type="ChEBI" id="CHEBI:456216"/>
        <dbReference type="EC" id="2.7.1.148"/>
    </reaction>
</comment>
<comment type="pathway">
    <text evidence="1">Isoprenoid biosynthesis; isopentenyl diphosphate biosynthesis via DXP pathway; isopentenyl diphosphate from 1-deoxy-D-xylulose 5-phosphate: step 3/6.</text>
</comment>
<comment type="similarity">
    <text evidence="1">Belongs to the GHMP kinase family. IspE subfamily.</text>
</comment>
<keyword id="KW-0067">ATP-binding</keyword>
<keyword id="KW-0414">Isoprene biosynthesis</keyword>
<keyword id="KW-0418">Kinase</keyword>
<keyword id="KW-0547">Nucleotide-binding</keyword>
<keyword id="KW-1185">Reference proteome</keyword>
<keyword id="KW-0808">Transferase</keyword>
<dbReference type="EC" id="2.7.1.148" evidence="1"/>
<dbReference type="EMBL" id="AP008971">
    <property type="protein sequence ID" value="BAG07970.1"/>
    <property type="molecule type" value="Genomic_DNA"/>
</dbReference>
<dbReference type="SMR" id="B0S057"/>
<dbReference type="STRING" id="334413.FMG_0552"/>
<dbReference type="KEGG" id="fma:FMG_0552"/>
<dbReference type="eggNOG" id="COG1947">
    <property type="taxonomic scope" value="Bacteria"/>
</dbReference>
<dbReference type="HOGENOM" id="CLU_053057_1_1_9"/>
<dbReference type="UniPathway" id="UPA00056">
    <property type="reaction ID" value="UER00094"/>
</dbReference>
<dbReference type="Proteomes" id="UP000001319">
    <property type="component" value="Chromosome"/>
</dbReference>
<dbReference type="GO" id="GO:0050515">
    <property type="term" value="F:4-(cytidine 5'-diphospho)-2-C-methyl-D-erythritol kinase activity"/>
    <property type="evidence" value="ECO:0007669"/>
    <property type="project" value="UniProtKB-UniRule"/>
</dbReference>
<dbReference type="GO" id="GO:0005524">
    <property type="term" value="F:ATP binding"/>
    <property type="evidence" value="ECO:0007669"/>
    <property type="project" value="UniProtKB-UniRule"/>
</dbReference>
<dbReference type="GO" id="GO:0019288">
    <property type="term" value="P:isopentenyl diphosphate biosynthetic process, methylerythritol 4-phosphate pathway"/>
    <property type="evidence" value="ECO:0007669"/>
    <property type="project" value="UniProtKB-UniRule"/>
</dbReference>
<dbReference type="GO" id="GO:0016114">
    <property type="term" value="P:terpenoid biosynthetic process"/>
    <property type="evidence" value="ECO:0007669"/>
    <property type="project" value="InterPro"/>
</dbReference>
<dbReference type="Gene3D" id="3.30.230.10">
    <property type="match status" value="1"/>
</dbReference>
<dbReference type="Gene3D" id="3.30.70.890">
    <property type="entry name" value="GHMP kinase, C-terminal domain"/>
    <property type="match status" value="1"/>
</dbReference>
<dbReference type="HAMAP" id="MF_00061">
    <property type="entry name" value="IspE"/>
    <property type="match status" value="1"/>
</dbReference>
<dbReference type="InterPro" id="IPR013750">
    <property type="entry name" value="GHMP_kinase_C_dom"/>
</dbReference>
<dbReference type="InterPro" id="IPR036554">
    <property type="entry name" value="GHMP_kinase_C_sf"/>
</dbReference>
<dbReference type="InterPro" id="IPR006204">
    <property type="entry name" value="GHMP_kinase_N_dom"/>
</dbReference>
<dbReference type="InterPro" id="IPR004424">
    <property type="entry name" value="IspE"/>
</dbReference>
<dbReference type="InterPro" id="IPR020568">
    <property type="entry name" value="Ribosomal_Su5_D2-typ_SF"/>
</dbReference>
<dbReference type="InterPro" id="IPR014721">
    <property type="entry name" value="Ribsml_uS5_D2-typ_fold_subgr"/>
</dbReference>
<dbReference type="NCBIfam" id="TIGR00154">
    <property type="entry name" value="ispE"/>
    <property type="match status" value="1"/>
</dbReference>
<dbReference type="PANTHER" id="PTHR43527">
    <property type="entry name" value="4-DIPHOSPHOCYTIDYL-2-C-METHYL-D-ERYTHRITOL KINASE, CHLOROPLASTIC"/>
    <property type="match status" value="1"/>
</dbReference>
<dbReference type="PANTHER" id="PTHR43527:SF2">
    <property type="entry name" value="4-DIPHOSPHOCYTIDYL-2-C-METHYL-D-ERYTHRITOL KINASE, CHLOROPLASTIC"/>
    <property type="match status" value="1"/>
</dbReference>
<dbReference type="Pfam" id="PF08544">
    <property type="entry name" value="GHMP_kinases_C"/>
    <property type="match status" value="1"/>
</dbReference>
<dbReference type="Pfam" id="PF00288">
    <property type="entry name" value="GHMP_kinases_N"/>
    <property type="match status" value="1"/>
</dbReference>
<dbReference type="PIRSF" id="PIRSF010376">
    <property type="entry name" value="IspE"/>
    <property type="match status" value="1"/>
</dbReference>
<dbReference type="SUPFAM" id="SSF55060">
    <property type="entry name" value="GHMP Kinase, C-terminal domain"/>
    <property type="match status" value="1"/>
</dbReference>
<dbReference type="SUPFAM" id="SSF54211">
    <property type="entry name" value="Ribosomal protein S5 domain 2-like"/>
    <property type="match status" value="1"/>
</dbReference>
<sequence>MMKINSYAKINLSLDVLDLREDGYHNIDTIMNLIDLHDVIEINRNNTNELKLSSNNSNFPTDKTNLIYKIFENLKKFRKINCSYDVFVDKQIPISAGLAGGSSNACEFLMYVNDDLSLNLSNQEIKEICRLTGADTFYFTSKKCVRATGIGNEFVRLSDFSNKNIIIVNNGMSISSKDVYDNLKESNGGLGKITVAIDSRDYETFYRKAFNTMESVSERLVEEISDIKEQLNNLGCDLSLMSGSGPTVFGIFENYNDYENCYSKLKDKYKYVFKTKTL</sequence>
<accession>B0S057</accession>
<feature type="chain" id="PRO_1000092087" description="4-diphosphocytidyl-2-C-methyl-D-erythritol kinase">
    <location>
        <begin position="1"/>
        <end position="278"/>
    </location>
</feature>
<feature type="active site" evidence="1">
    <location>
        <position position="9"/>
    </location>
</feature>
<feature type="active site" evidence="1">
    <location>
        <position position="135"/>
    </location>
</feature>
<feature type="binding site" evidence="1">
    <location>
        <begin position="93"/>
        <end position="103"/>
    </location>
    <ligand>
        <name>ATP</name>
        <dbReference type="ChEBI" id="CHEBI:30616"/>
    </ligand>
</feature>
<reference key="1">
    <citation type="journal article" date="2008" name="DNA Res.">
        <title>Complete genome sequence of Finegoldia magna, an anaerobic opportunistic pathogen.</title>
        <authorList>
            <person name="Goto T."/>
            <person name="Yamashita A."/>
            <person name="Hirakawa H."/>
            <person name="Matsutani M."/>
            <person name="Todo K."/>
            <person name="Ohshima K."/>
            <person name="Toh H."/>
            <person name="Miyamoto K."/>
            <person name="Kuhara S."/>
            <person name="Hattori M."/>
            <person name="Shimizu T."/>
            <person name="Akimoto S."/>
        </authorList>
    </citation>
    <scope>NUCLEOTIDE SEQUENCE [LARGE SCALE GENOMIC DNA]</scope>
    <source>
        <strain>ATCC 29328 / DSM 20472 / WAL 2508</strain>
    </source>
</reference>